<organism>
    <name type="scientific">Trichosurus vulpecula</name>
    <name type="common">Brush-tailed possum</name>
    <dbReference type="NCBI Taxonomy" id="9337"/>
    <lineage>
        <taxon>Eukaryota</taxon>
        <taxon>Metazoa</taxon>
        <taxon>Chordata</taxon>
        <taxon>Craniata</taxon>
        <taxon>Vertebrata</taxon>
        <taxon>Euteleostomi</taxon>
        <taxon>Mammalia</taxon>
        <taxon>Metatheria</taxon>
        <taxon>Diprotodontia</taxon>
        <taxon>Phalangeridae</taxon>
        <taxon>Trichosurus</taxon>
    </lineage>
</organism>
<sequence length="141" mass="15061">MERYQELTVLLLLLLLEGGSWGAGHLRPLCRPTNATLAAESDACPVCVTFTTTICAGYCPSMVRVLPAALPPGPQLVCTYRELSFSSIRLPGCPPGVDPIFSFPVALSCSCGSCRLSHSDCGGPRARPHLCTRPHLSLHLL</sequence>
<name>LSHB_TRIVU</name>
<protein>
    <recommendedName>
        <fullName>Lutropin subunit beta</fullName>
        <shortName>Lutropin beta chain</shortName>
    </recommendedName>
    <alternativeName>
        <fullName>Luteinizing hormone subunit beta</fullName>
        <shortName>LH-B</shortName>
        <shortName>LSH-B</shortName>
        <shortName>LSH-beta</shortName>
    </alternativeName>
</protein>
<reference key="1">
    <citation type="journal article" date="1998" name="Mamm. Genome">
        <title>cDNA cloning of luteinizing hormone subunits from brushtail possum and red kangaroo.</title>
        <authorList>
            <person name="Harrison G.A."/>
            <person name="Deane E.M."/>
            <person name="Cooper D.W."/>
        </authorList>
    </citation>
    <scope>NUCLEOTIDE SEQUENCE [MRNA]</scope>
    <source>
        <tissue>Pituitary</tissue>
    </source>
</reference>
<reference key="2">
    <citation type="submission" date="1998-09" db="EMBL/GenBank/DDBJ databases">
        <authorList>
            <person name="Lawrence S.B."/>
            <person name="McNatty K.P."/>
            <person name="Fidler A.E."/>
        </authorList>
    </citation>
    <scope>NUCLEOTIDE SEQUENCE [MRNA]</scope>
</reference>
<proteinExistence type="evidence at transcript level"/>
<keyword id="KW-1015">Disulfide bond</keyword>
<keyword id="KW-0325">Glycoprotein</keyword>
<keyword id="KW-0372">Hormone</keyword>
<keyword id="KW-0964">Secreted</keyword>
<keyword id="KW-0732">Signal</keyword>
<dbReference type="EMBL" id="AF017448">
    <property type="protein sequence ID" value="AAC96019.1"/>
    <property type="molecule type" value="mRNA"/>
</dbReference>
<dbReference type="EMBL" id="AF090388">
    <property type="protein sequence ID" value="AAC63526.1"/>
    <property type="molecule type" value="mRNA"/>
</dbReference>
<dbReference type="SMR" id="O46482"/>
<dbReference type="GlyCosmos" id="O46482">
    <property type="glycosylation" value="1 site, No reported glycans"/>
</dbReference>
<dbReference type="OrthoDB" id="8453657at2759"/>
<dbReference type="GO" id="GO:0005737">
    <property type="term" value="C:cytoplasm"/>
    <property type="evidence" value="ECO:0007669"/>
    <property type="project" value="TreeGrafter"/>
</dbReference>
<dbReference type="GO" id="GO:0005615">
    <property type="term" value="C:extracellular space"/>
    <property type="evidence" value="ECO:0007669"/>
    <property type="project" value="TreeGrafter"/>
</dbReference>
<dbReference type="GO" id="GO:0005179">
    <property type="term" value="F:hormone activity"/>
    <property type="evidence" value="ECO:0007669"/>
    <property type="project" value="UniProtKB-KW"/>
</dbReference>
<dbReference type="GO" id="GO:0007186">
    <property type="term" value="P:G protein-coupled receptor signaling pathway"/>
    <property type="evidence" value="ECO:0007669"/>
    <property type="project" value="TreeGrafter"/>
</dbReference>
<dbReference type="CDD" id="cd00069">
    <property type="entry name" value="GHB_like"/>
    <property type="match status" value="1"/>
</dbReference>
<dbReference type="FunFam" id="2.10.90.10:FF:000007">
    <property type="entry name" value="Luteinizing hormone beta subunit"/>
    <property type="match status" value="1"/>
</dbReference>
<dbReference type="Gene3D" id="2.10.90.10">
    <property type="entry name" value="Cystine-knot cytokines"/>
    <property type="match status" value="1"/>
</dbReference>
<dbReference type="InterPro" id="IPR029034">
    <property type="entry name" value="Cystine-knot_cytokine"/>
</dbReference>
<dbReference type="InterPro" id="IPR006208">
    <property type="entry name" value="Glyco_hormone_CN"/>
</dbReference>
<dbReference type="InterPro" id="IPR001545">
    <property type="entry name" value="Gonadotropin_bsu"/>
</dbReference>
<dbReference type="InterPro" id="IPR018245">
    <property type="entry name" value="Gonadotropin_bsu_CS"/>
</dbReference>
<dbReference type="PANTHER" id="PTHR11515">
    <property type="entry name" value="GLYCOPROTEIN HORMONE BETA CHAIN"/>
    <property type="match status" value="1"/>
</dbReference>
<dbReference type="PANTHER" id="PTHR11515:SF11">
    <property type="entry name" value="LUTROPIN SUBUNIT BETA"/>
    <property type="match status" value="1"/>
</dbReference>
<dbReference type="Pfam" id="PF00007">
    <property type="entry name" value="Cys_knot"/>
    <property type="match status" value="1"/>
</dbReference>
<dbReference type="SMART" id="SM00068">
    <property type="entry name" value="GHB"/>
    <property type="match status" value="1"/>
</dbReference>
<dbReference type="SUPFAM" id="SSF57501">
    <property type="entry name" value="Cystine-knot cytokines"/>
    <property type="match status" value="1"/>
</dbReference>
<dbReference type="PROSITE" id="PS00261">
    <property type="entry name" value="GLYCO_HORMONE_BETA_1"/>
    <property type="match status" value="1"/>
</dbReference>
<dbReference type="PROSITE" id="PS00689">
    <property type="entry name" value="GLYCO_HORMONE_BETA_2"/>
    <property type="match status" value="1"/>
</dbReference>
<evidence type="ECO:0000250" key="1"/>
<evidence type="ECO:0000255" key="2"/>
<evidence type="ECO:0000305" key="3"/>
<accession>O46482</accession>
<comment type="function">
    <text>Promotes spermatogenesis and ovulation by stimulating the testes and ovaries to synthesize steroids.</text>
</comment>
<comment type="subunit">
    <text>Heterodimer of a common alpha chain and a unique beta chain which confers biological specificity to thyrotropin, lutropin, follitropin and gonadotropin.</text>
</comment>
<comment type="subcellular location">
    <subcellularLocation>
        <location>Secreted</location>
    </subcellularLocation>
</comment>
<comment type="similarity">
    <text evidence="3">Belongs to the glycoprotein hormones subunit beta family.</text>
</comment>
<feature type="signal peptide" evidence="1">
    <location>
        <begin position="1"/>
        <end position="22"/>
    </location>
</feature>
<feature type="chain" id="PRO_0000011738" description="Lutropin subunit beta">
    <location>
        <begin position="23"/>
        <end position="141"/>
    </location>
</feature>
<feature type="glycosylation site" description="N-linked (GlcNAc...) asparagine" evidence="2">
    <location>
        <position position="34"/>
    </location>
</feature>
<feature type="disulfide bond" evidence="1">
    <location>
        <begin position="30"/>
        <end position="78"/>
    </location>
</feature>
<feature type="disulfide bond" evidence="1">
    <location>
        <begin position="44"/>
        <end position="93"/>
    </location>
</feature>
<feature type="disulfide bond" evidence="1">
    <location>
        <begin position="47"/>
        <end position="131"/>
    </location>
</feature>
<feature type="disulfide bond" evidence="1">
    <location>
        <begin position="55"/>
        <end position="109"/>
    </location>
</feature>
<feature type="disulfide bond" evidence="1">
    <location>
        <begin position="59"/>
        <end position="111"/>
    </location>
</feature>
<feature type="disulfide bond" evidence="1">
    <location>
        <begin position="114"/>
        <end position="121"/>
    </location>
</feature>
<gene>
    <name type="primary">LHB</name>
</gene>